<reference key="1">
    <citation type="journal article" date="2000" name="Antimicrob. Agents Chemother.">
        <title>Identification of the novobiocin biosynthetic gene cluster of Streptomyces spheroides NCIB 11891.</title>
        <authorList>
            <person name="Steffensky M."/>
            <person name="Muhlenweg A."/>
            <person name="Wang Z.X."/>
            <person name="Li S.M."/>
            <person name="Heide L."/>
        </authorList>
    </citation>
    <scope>NUCLEOTIDE SEQUENCE [GENOMIC DNA]</scope>
    <source>
        <strain>ATCC 23965 / DSM 40292 / JCM 4252 / NBRC 12917 / NCIMB 11891 / NRRL 2449</strain>
    </source>
</reference>
<reference key="2">
    <citation type="journal article" date="2003" name="Biochemistry">
        <title>Initial characterization of novobiocic acid noviosyl transferase activity of NovM in biosynthesis of the antibiotic novobiocin.</title>
        <authorList>
            <person name="Freel Meyers C.L."/>
            <person name="Oberthur M."/>
            <person name="Anderson J.W."/>
            <person name="Kahne D."/>
            <person name="Walsh C.T."/>
        </authorList>
    </citation>
    <scope>FUNCTION</scope>
    <scope>CATALYTIC ACTIVITY</scope>
    <scope>ACTIVITY REGULATION</scope>
    <scope>BIOPHYSICOCHEMICAL PROPERTIES</scope>
    <scope>PATHWAY</scope>
    <source>
        <strain>ATCC 23965 / DSM 40292 / JCM 4252 / NBRC 12917 / NCIMB 11891 / NRRL 2449</strain>
    </source>
</reference>
<reference key="3">
    <citation type="journal article" date="2003" name="Org. Lett.">
        <title>Substrate specificity of NovM: implications for novobiocin biosynthesis and glycorandomization.</title>
        <authorList>
            <person name="Albermann C."/>
            <person name="Soriano A."/>
            <person name="Jiang J."/>
            <person name="Vollmer H."/>
            <person name="Biggins J.B."/>
            <person name="Barton W.A."/>
            <person name="Lesniak J."/>
            <person name="Nikolov D.B."/>
            <person name="Thorson J.S."/>
        </authorList>
    </citation>
    <scope>FUNCTION</scope>
    <source>
        <strain>ATCC 23965 / DSM 40292 / JCM 4252 / NBRC 12917 / NCIMB 11891 / NRRL 2449</strain>
    </source>
</reference>
<reference key="4">
    <citation type="journal article" date="2004" name="Proc. Natl. Acad. Sci. U.S.A.">
        <title>Mass spectrometric characterization of a three-enzyme tandem reaction for assembly and modification of the novobiocin skeleton.</title>
        <authorList>
            <person name="Pi N."/>
            <person name="Meyers C.L."/>
            <person name="Pacholec M."/>
            <person name="Walsh C.T."/>
            <person name="Leary J.A."/>
        </authorList>
    </citation>
    <scope>FUNCTION</scope>
    <source>
        <strain>ATCC 23965 / DSM 40292 / JCM 4252 / NBRC 12917 / NCIMB 11891 / NRRL 2449</strain>
    </source>
</reference>
<keyword id="KW-0045">Antibiotic biosynthesis</keyword>
<keyword id="KW-0328">Glycosyltransferase</keyword>
<keyword id="KW-0808">Transferase</keyword>
<evidence type="ECO:0000269" key="1">
    <source>
    </source>
</evidence>
<evidence type="ECO:0000269" key="2">
    <source>
    </source>
</evidence>
<evidence type="ECO:0000269" key="3">
    <source>
    </source>
</evidence>
<evidence type="ECO:0000305" key="4"/>
<proteinExistence type="evidence at protein level"/>
<protein>
    <recommendedName>
        <fullName>L-demethylnoviosyl transferase</fullName>
        <ecNumber evidence="2">2.4.1.302</ecNumber>
    </recommendedName>
    <alternativeName>
        <fullName>Novobiocin biosynthesis protein M</fullName>
    </alternativeName>
</protein>
<dbReference type="EC" id="2.4.1.302" evidence="2"/>
<dbReference type="EMBL" id="AF170880">
    <property type="protein sequence ID" value="AAF67506.1"/>
    <property type="molecule type" value="Genomic_DNA"/>
</dbReference>
<dbReference type="RefSeq" id="WP_079127919.1">
    <property type="nucleotide sequence ID" value="NZ_JBFBIX010000004.1"/>
</dbReference>
<dbReference type="SMR" id="Q9L9F5"/>
<dbReference type="CAZy" id="GT1">
    <property type="family name" value="Glycosyltransferase Family 1"/>
</dbReference>
<dbReference type="KEGG" id="ag:AAF67506"/>
<dbReference type="BioCyc" id="MetaCyc:MONOMER-18054"/>
<dbReference type="SABIO-RK" id="Q9L9F5"/>
<dbReference type="UniPathway" id="UPA01035"/>
<dbReference type="GO" id="GO:0016758">
    <property type="term" value="F:hexosyltransferase activity"/>
    <property type="evidence" value="ECO:0000314"/>
    <property type="project" value="UniProtKB"/>
</dbReference>
<dbReference type="GO" id="GO:0008194">
    <property type="term" value="F:UDP-glycosyltransferase activity"/>
    <property type="evidence" value="ECO:0007669"/>
    <property type="project" value="InterPro"/>
</dbReference>
<dbReference type="GO" id="GO:0043642">
    <property type="term" value="P:novobiocin biosynthetic process"/>
    <property type="evidence" value="ECO:0000314"/>
    <property type="project" value="UniProtKB"/>
</dbReference>
<dbReference type="CDD" id="cd03784">
    <property type="entry name" value="GT1_Gtf-like"/>
    <property type="match status" value="1"/>
</dbReference>
<dbReference type="FunFam" id="3.40.50.2000:FF:000072">
    <property type="entry name" value="Glycosyl transferase"/>
    <property type="match status" value="1"/>
</dbReference>
<dbReference type="Gene3D" id="3.40.50.2000">
    <property type="entry name" value="Glycogen Phosphorylase B"/>
    <property type="match status" value="2"/>
</dbReference>
<dbReference type="InterPro" id="IPR010610">
    <property type="entry name" value="EryCIII-like_C"/>
</dbReference>
<dbReference type="InterPro" id="IPR048284">
    <property type="entry name" value="EryCIII-like_N"/>
</dbReference>
<dbReference type="InterPro" id="IPR050426">
    <property type="entry name" value="Glycosyltransferase_28"/>
</dbReference>
<dbReference type="InterPro" id="IPR002213">
    <property type="entry name" value="UDP_glucos_trans"/>
</dbReference>
<dbReference type="PANTHER" id="PTHR48050">
    <property type="entry name" value="STEROL 3-BETA-GLUCOSYLTRANSFERASE"/>
    <property type="match status" value="1"/>
</dbReference>
<dbReference type="PANTHER" id="PTHR48050:SF13">
    <property type="entry name" value="STEROL 3-BETA-GLUCOSYLTRANSFERASE UGT80A2"/>
    <property type="match status" value="1"/>
</dbReference>
<dbReference type="Pfam" id="PF06722">
    <property type="entry name" value="EryCIII-like_C"/>
    <property type="match status" value="1"/>
</dbReference>
<dbReference type="Pfam" id="PF21036">
    <property type="entry name" value="EryCIII-like_N"/>
    <property type="match status" value="1"/>
</dbReference>
<dbReference type="SUPFAM" id="SSF53756">
    <property type="entry name" value="UDP-Glycosyltransferase/glycogen phosphorylase"/>
    <property type="match status" value="1"/>
</dbReference>
<sequence>MRVLLTSLPGIGHLFPMVPLGWALQAAGHTVLVATDREFLPVVTGAGLSATAVLDPVDPVELFKPVEPFGDPLSPAERTGHRCAEAGVRALPAMRALVDVWHPDLVIAEPMELAGPAAATNAGVPWVRHSYGLIPPGPLLSVAAEVLDAELAVLGLSALAKPARTIDVCPDSLRPSDGVATVPMRYVPYNGPAGVPDWLLAGPPARPRVCLTLGTSLPRRDPHVAPLWRLLLDELVALGQEVVIAIDESHRPLLGHLPDGVRAARIPLCDLLPTCTAIVHHGGSGSTMAAASFGVPQLVVPHFADHFTNAERLTAVGAGLSLPHDTDDLARISAACELITGDGPHRAISRRLADENARRPTPAVVAEGLAAEQRSMTPA</sequence>
<name>NOVM_STRNV</name>
<comment type="function">
    <text evidence="1 2 3">Catalyzes the transfer of L-noviose from dTDP-4-O-demethyl-beta-L-noviose to the phenolic oxygen of novobiocic acid, creating the full ABC ring system in the novobiocin biosynthesis pathway. Novobiocin is an aminocoumarin family antibiotic that targets bacterial DNA gyrases. Also shows activity with variant coumarin aglycones, suggesting it may be a promiscuous catalyst for noviosylation of a range of planar scaffolds. Does not show activity with TDP-L-rhamnose.</text>
</comment>
<comment type="catalytic activity">
    <reaction evidence="2">
        <text>dTDP-4-O-demethyl-beta-L-noviose + novobiocic acid = desmethyldescarbamoylnovobiocin + dTDP + H(+)</text>
        <dbReference type="Rhea" id="RHEA:36695"/>
        <dbReference type="ChEBI" id="CHEBI:15378"/>
        <dbReference type="ChEBI" id="CHEBI:58369"/>
        <dbReference type="ChEBI" id="CHEBI:73953"/>
        <dbReference type="ChEBI" id="CHEBI:73957"/>
        <dbReference type="ChEBI" id="CHEBI:74153"/>
        <dbReference type="EC" id="2.4.1.302"/>
    </reaction>
</comment>
<comment type="activity regulation">
    <text evidence="2">Inhibited by TDP-L-rhamnose, the sugar donor that most closely structurally resembles the natural substrate dTDP-beta-L-noviose.</text>
</comment>
<comment type="biophysicochemical properties">
    <kinetics>
        <KM evidence="2">32 uM for novobiocic acid</KM>
        <text>kcat is 313 min(-1) with novobiocic acid as substrate.</text>
    </kinetics>
</comment>
<comment type="pathway">
    <text evidence="2">Antibiotic biosynthesis; novobiocin biosynthesis.</text>
</comment>
<comment type="similarity">
    <text evidence="4">Belongs to the glycosyltransferase 28 family.</text>
</comment>
<gene>
    <name type="primary">novM</name>
</gene>
<accession>Q9L9F5</accession>
<organism>
    <name type="scientific">Streptomyces niveus</name>
    <name type="common">Streptomyces spheroides</name>
    <dbReference type="NCBI Taxonomy" id="193462"/>
    <lineage>
        <taxon>Bacteria</taxon>
        <taxon>Bacillati</taxon>
        <taxon>Actinomycetota</taxon>
        <taxon>Actinomycetes</taxon>
        <taxon>Kitasatosporales</taxon>
        <taxon>Streptomycetaceae</taxon>
        <taxon>Streptomyces</taxon>
    </lineage>
</organism>
<feature type="chain" id="PRO_0000424000" description="L-demethylnoviosyl transferase">
    <location>
        <begin position="1"/>
        <end position="379"/>
    </location>
</feature>